<evidence type="ECO:0000269" key="1">
    <source>
    </source>
</evidence>
<evidence type="ECO:0000269" key="2">
    <source>
    </source>
</evidence>
<evidence type="ECO:0000303" key="3">
    <source>
    </source>
</evidence>
<evidence type="ECO:0000305" key="4"/>
<evidence type="ECO:0007744" key="5">
    <source>
        <dbReference type="PDB" id="6NSI"/>
    </source>
</evidence>
<evidence type="ECO:0007829" key="6">
    <source>
        <dbReference type="PDB" id="6NSI"/>
    </source>
</evidence>
<name>YTGA_CHLTR</name>
<comment type="function">
    <text evidence="1 2">Part of the ATP-binding cassette (ABC) transport system YtgABCD involved in metal import (PubMed:19556290, PubMed:31611288). Binds Fe(2+), Mn(2+) and Ni(2+), with a preference for Fe(2+) and delivers them to the membrane permease for translocation into the cytoplasm (PubMed:31611288).</text>
</comment>
<comment type="subunit">
    <text evidence="2">Monomer.</text>
</comment>
<comment type="subcellular location">
    <subcellularLocation>
        <location evidence="1">Periplasm</location>
    </subcellularLocation>
</comment>
<comment type="induction">
    <text evidence="1">Up-regulated upon iron starvation (at protein level).</text>
</comment>
<comment type="similarity">
    <text evidence="4">Belongs to the bacterial solute-binding protein 9 family.</text>
</comment>
<comment type="caution">
    <text evidence="1 2">One study suggests that YtgA specifically binds Fe(3+) (PubMed:19556290). However, another study shows that although YtgA binds Fe(3+), it is unlikely to be the physiological ligand as the stability of the binding is unlikely to permit the release of Fe(3+) to the ABC transporter for cytoplasmic import (PubMed:31611288).</text>
</comment>
<comment type="sequence caution" evidence="4">
    <conflict type="erroneous initiation">
        <sequence resource="EMBL-CDS" id="AAC35948"/>
    </conflict>
</comment>
<reference key="1">
    <citation type="journal article" date="1999" name="Microbiology">
        <title>Use of primate model system to identify Chlamydia trachomatis protein antigens recognized uniquely in the context of infection.</title>
        <authorList>
            <person name="Bannantine J.P."/>
            <person name="Rockey D.D."/>
        </authorList>
    </citation>
    <scope>NUCLEOTIDE SEQUENCE [GENOMIC DNA]</scope>
    <source>
        <strain>L2/434/Bu</strain>
    </source>
</reference>
<reference key="2">
    <citation type="journal article" date="1998" name="Science">
        <title>Genome sequence of an obligate intracellular pathogen of humans: Chlamydia trachomatis.</title>
        <authorList>
            <person name="Stephens R.S."/>
            <person name="Kalman S."/>
            <person name="Lammel C.J."/>
            <person name="Fan J."/>
            <person name="Marathe R."/>
            <person name="Aravind L."/>
            <person name="Mitchell W.P."/>
            <person name="Olinger L."/>
            <person name="Tatusov R.L."/>
            <person name="Zhao Q."/>
            <person name="Koonin E.V."/>
            <person name="Davis R.W."/>
        </authorList>
    </citation>
    <scope>NUCLEOTIDE SEQUENCE [LARGE SCALE GENOMIC DNA]</scope>
    <source>
        <strain>ATCC VR-885 / DSM 19411 / UW-3/Cx</strain>
    </source>
</reference>
<reference key="3">
    <citation type="journal article" date="2009" name="Microbiology">
        <title>Chlamydia trachomatis YtgA is an iron-binding periplasmic protein induced by iron restriction.</title>
        <authorList>
            <person name="Miller J.D."/>
            <person name="Sal M.S."/>
            <person name="Schell M."/>
            <person name="Whittimore J.D."/>
            <person name="Raulston J.E."/>
        </authorList>
    </citation>
    <scope>FUNCTION</scope>
    <scope>SUBCELLULAR LOCATION</scope>
    <scope>INDUCTION</scope>
    <source>
        <strain>E/UW-5/CX</strain>
    </source>
</reference>
<reference evidence="5" key="4">
    <citation type="journal article" date="2019" name="J. Bacteriol.">
        <title>Structure and Metal Binding Properties of Chlamydia trachomatis YtgA.</title>
        <authorList>
            <person name="Luo Z."/>
            <person name="Neville S.L."/>
            <person name="Campbell R."/>
            <person name="Morey J.R."/>
            <person name="Menon S."/>
            <person name="Thomas M."/>
            <person name="Eijkelkamp B.A."/>
            <person name="Ween M.P."/>
            <person name="Huston W.M."/>
            <person name="Kobe B."/>
            <person name="McDevitt C.A."/>
        </authorList>
    </citation>
    <scope>X-RAY CRYSTALLOGRAPHY (2.00 ANGSTROMS) OF 40-326 IN COMPLEX WITH IRON</scope>
    <scope>FUNCTION</scope>
    <scope>SUBUNIT</scope>
</reference>
<sequence>MSFFHTRKYKLILRGLLCLAGCFLMNSCSSSRGNQPADESIYVLSMNRMICDCVSRITGDRVKNIVLIDGAIDPHSYEMVKGDEDRMAMSQLIFCNGLGLEHSASLRKHLEGNPKVVDLGQRLLNKNCFDLLSEEGFPDPHIWTDMRVWGAAVKEMAAALIQQFPQYEEDFQKNADQILSEMEELDRWAARSLSTIPEKNRYLVTGHNAFSYFTRRYLSSDAERVSGEWRSRCISPEGLSPEAQISIRDIMRVVEYISANDVEVVFLEDTLNQDALRKIVSCSKSGQKIRLAKSPLYSDNVCDNYFSTFQHNVRTITEELGGTVLE</sequence>
<protein>
    <recommendedName>
        <fullName evidence="3">Metal-binding protein YtgA</fullName>
    </recommendedName>
</protein>
<dbReference type="EMBL" id="AF077010">
    <property type="protein sequence ID" value="AAC35948.1"/>
    <property type="status" value="ALT_INIT"/>
    <property type="molecule type" value="Genomic_DNA"/>
</dbReference>
<dbReference type="EMBL" id="AE001273">
    <property type="protein sequence ID" value="AAC67658.1"/>
    <property type="molecule type" value="Genomic_DNA"/>
</dbReference>
<dbReference type="PIR" id="E71561">
    <property type="entry name" value="E71561"/>
</dbReference>
<dbReference type="RefSeq" id="NP_219570.1">
    <property type="nucleotide sequence ID" value="NC_000117.1"/>
</dbReference>
<dbReference type="RefSeq" id="WP_009871416.1">
    <property type="nucleotide sequence ID" value="NC_000117.1"/>
</dbReference>
<dbReference type="PDB" id="6NSI">
    <property type="method" value="X-ray"/>
    <property type="resolution" value="2.00 A"/>
    <property type="chains" value="A=40-326"/>
</dbReference>
<dbReference type="PDBsum" id="6NSI"/>
<dbReference type="SMR" id="Q9S529"/>
<dbReference type="FunCoup" id="Q9S529">
    <property type="interactions" value="24"/>
</dbReference>
<dbReference type="STRING" id="272561.CT_067"/>
<dbReference type="EnsemblBacteria" id="AAC67658">
    <property type="protein sequence ID" value="AAC67658"/>
    <property type="gene ID" value="CT_067"/>
</dbReference>
<dbReference type="GeneID" id="884065"/>
<dbReference type="KEGG" id="ctr:CT_067"/>
<dbReference type="PATRIC" id="fig|272561.5.peg.76"/>
<dbReference type="HOGENOM" id="CLU_016838_1_1_0"/>
<dbReference type="InParanoid" id="Q9S529"/>
<dbReference type="OrthoDB" id="9793396at2"/>
<dbReference type="Proteomes" id="UP000000431">
    <property type="component" value="Chromosome"/>
</dbReference>
<dbReference type="GO" id="GO:0042597">
    <property type="term" value="C:periplasmic space"/>
    <property type="evidence" value="ECO:0007669"/>
    <property type="project" value="UniProtKB-SubCell"/>
</dbReference>
<dbReference type="GO" id="GO:0046872">
    <property type="term" value="F:metal ion binding"/>
    <property type="evidence" value="ECO:0007669"/>
    <property type="project" value="UniProtKB-KW"/>
</dbReference>
<dbReference type="GO" id="GO:0007155">
    <property type="term" value="P:cell adhesion"/>
    <property type="evidence" value="ECO:0007669"/>
    <property type="project" value="InterPro"/>
</dbReference>
<dbReference type="GO" id="GO:0030001">
    <property type="term" value="P:metal ion transport"/>
    <property type="evidence" value="ECO:0007669"/>
    <property type="project" value="InterPro"/>
</dbReference>
<dbReference type="Gene3D" id="3.40.50.1980">
    <property type="entry name" value="Nitrogenase molybdenum iron protein domain"/>
    <property type="match status" value="2"/>
</dbReference>
<dbReference type="InterPro" id="IPR006129">
    <property type="entry name" value="AdhesinB"/>
</dbReference>
<dbReference type="InterPro" id="IPR050492">
    <property type="entry name" value="Bact_metal-bind_prot9"/>
</dbReference>
<dbReference type="InterPro" id="IPR006128">
    <property type="entry name" value="Lipoprotein_PsaA-like"/>
</dbReference>
<dbReference type="InterPro" id="IPR006127">
    <property type="entry name" value="ZnuA-like"/>
</dbReference>
<dbReference type="PANTHER" id="PTHR42953">
    <property type="entry name" value="HIGH-AFFINITY ZINC UPTAKE SYSTEM PROTEIN ZNUA-RELATED"/>
    <property type="match status" value="1"/>
</dbReference>
<dbReference type="PANTHER" id="PTHR42953:SF1">
    <property type="entry name" value="METAL-BINDING PROTEIN HI_0362-RELATED"/>
    <property type="match status" value="1"/>
</dbReference>
<dbReference type="Pfam" id="PF01297">
    <property type="entry name" value="ZnuA"/>
    <property type="match status" value="1"/>
</dbReference>
<dbReference type="PRINTS" id="PR00691">
    <property type="entry name" value="ADHESINB"/>
</dbReference>
<dbReference type="PRINTS" id="PR00690">
    <property type="entry name" value="ADHESNFAMILY"/>
</dbReference>
<dbReference type="SUPFAM" id="SSF53807">
    <property type="entry name" value="Helical backbone' metal receptor"/>
    <property type="match status" value="1"/>
</dbReference>
<gene>
    <name evidence="3" type="primary">ytgA</name>
    <name type="ordered locus">CT_067</name>
</gene>
<proteinExistence type="evidence at protein level"/>
<keyword id="KW-0002">3D-structure</keyword>
<keyword id="KW-0408">Iron</keyword>
<keyword id="KW-0479">Metal-binding</keyword>
<keyword id="KW-0574">Periplasm</keyword>
<keyword id="KW-1185">Reference proteome</keyword>
<keyword id="KW-0732">Signal</keyword>
<keyword id="KW-0813">Transport</keyword>
<organism>
    <name type="scientific">Chlamydia trachomatis serovar D (strain ATCC VR-885 / DSM 19411 / UW-3/Cx)</name>
    <dbReference type="NCBI Taxonomy" id="272561"/>
    <lineage>
        <taxon>Bacteria</taxon>
        <taxon>Pseudomonadati</taxon>
        <taxon>Chlamydiota</taxon>
        <taxon>Chlamydiia</taxon>
        <taxon>Chlamydiales</taxon>
        <taxon>Chlamydiaceae</taxon>
        <taxon>Chlamydia/Chlamydophila group</taxon>
        <taxon>Chlamydia</taxon>
    </lineage>
</organism>
<feature type="signal peptide" evidence="4">
    <location>
        <begin position="1"/>
        <end position="21"/>
    </location>
</feature>
<feature type="chain" id="PRO_0000031901" description="Metal-binding protein YtgA">
    <location>
        <begin position="22"/>
        <end position="326"/>
    </location>
</feature>
<feature type="binding site" evidence="2 5">
    <location>
        <position position="75"/>
    </location>
    <ligand>
        <name>Fe(2+)</name>
        <dbReference type="ChEBI" id="CHEBI:29033"/>
    </ligand>
</feature>
<feature type="binding site" evidence="2 5">
    <location>
        <position position="141"/>
    </location>
    <ligand>
        <name>Fe(2+)</name>
        <dbReference type="ChEBI" id="CHEBI:29033"/>
    </ligand>
</feature>
<feature type="binding site" evidence="2 5">
    <location>
        <position position="207"/>
    </location>
    <ligand>
        <name>Fe(2+)</name>
        <dbReference type="ChEBI" id="CHEBI:29033"/>
    </ligand>
</feature>
<feature type="binding site" evidence="2 5">
    <location>
        <position position="299"/>
    </location>
    <ligand>
        <name>Fe(2+)</name>
        <dbReference type="ChEBI" id="CHEBI:29033"/>
    </ligand>
</feature>
<feature type="sequence variant" description="In strain: L2/434/Bu.">
    <original>A</original>
    <variation>V</variation>
    <location>
        <position position="190"/>
    </location>
</feature>
<feature type="strand" evidence="6">
    <location>
        <begin position="42"/>
        <end position="47"/>
    </location>
</feature>
<feature type="helix" evidence="6">
    <location>
        <begin position="48"/>
        <end position="58"/>
    </location>
</feature>
<feature type="helix" evidence="6">
    <location>
        <begin position="59"/>
        <end position="61"/>
    </location>
</feature>
<feature type="strand" evidence="6">
    <location>
        <begin position="62"/>
        <end position="68"/>
    </location>
</feature>
<feature type="helix" evidence="6">
    <location>
        <begin position="74"/>
        <end position="76"/>
    </location>
</feature>
<feature type="helix" evidence="6">
    <location>
        <begin position="83"/>
        <end position="89"/>
    </location>
</feature>
<feature type="strand" evidence="6">
    <location>
        <begin position="93"/>
        <end position="95"/>
    </location>
</feature>
<feature type="turn" evidence="6">
    <location>
        <begin position="98"/>
        <end position="101"/>
    </location>
</feature>
<feature type="helix" evidence="6">
    <location>
        <begin position="104"/>
        <end position="110"/>
    </location>
</feature>
<feature type="strand" evidence="6">
    <location>
        <begin position="116"/>
        <end position="118"/>
    </location>
</feature>
<feature type="helix" evidence="6">
    <location>
        <begin position="119"/>
        <end position="124"/>
    </location>
</feature>
<feature type="turn" evidence="6">
    <location>
        <begin position="125"/>
        <end position="127"/>
    </location>
</feature>
<feature type="helix" evidence="6">
    <location>
        <begin position="142"/>
        <end position="144"/>
    </location>
</feature>
<feature type="helix" evidence="6">
    <location>
        <begin position="146"/>
        <end position="163"/>
    </location>
</feature>
<feature type="helix" evidence="6">
    <location>
        <begin position="165"/>
        <end position="167"/>
    </location>
</feature>
<feature type="helix" evidence="6">
    <location>
        <begin position="168"/>
        <end position="193"/>
    </location>
</feature>
<feature type="helix" evidence="6">
    <location>
        <begin position="198"/>
        <end position="200"/>
    </location>
</feature>
<feature type="strand" evidence="6">
    <location>
        <begin position="203"/>
        <end position="208"/>
    </location>
</feature>
<feature type="helix" evidence="6">
    <location>
        <begin position="211"/>
        <end position="217"/>
    </location>
</feature>
<feature type="helix" evidence="6">
    <location>
        <begin position="221"/>
        <end position="226"/>
    </location>
</feature>
<feature type="helix" evidence="6">
    <location>
        <begin position="228"/>
        <end position="232"/>
    </location>
</feature>
<feature type="helix" evidence="6">
    <location>
        <begin position="247"/>
        <end position="260"/>
    </location>
</feature>
<feature type="strand" evidence="6">
    <location>
        <begin position="264"/>
        <end position="266"/>
    </location>
</feature>
<feature type="helix" evidence="6">
    <location>
        <begin position="274"/>
        <end position="281"/>
    </location>
</feature>
<feature type="strand" evidence="6">
    <location>
        <begin position="298"/>
        <end position="300"/>
    </location>
</feature>
<feature type="helix" evidence="6">
    <location>
        <begin position="305"/>
        <end position="319"/>
    </location>
</feature>
<accession>Q9S529</accession>
<accession>O84070</accession>